<feature type="chain" id="PRO_0000086137" description="Probable serine/threonine-protein kinase C70.05c">
    <location>
        <begin position="1"/>
        <end position="781"/>
    </location>
</feature>
<feature type="domain" description="Protein kinase" evidence="1">
    <location>
        <begin position="432"/>
        <end position="742"/>
    </location>
</feature>
<feature type="region of interest" description="Disordered" evidence="3">
    <location>
        <begin position="1"/>
        <end position="315"/>
    </location>
</feature>
<feature type="region of interest" description="Disordered" evidence="3">
    <location>
        <begin position="368"/>
        <end position="417"/>
    </location>
</feature>
<feature type="compositionally biased region" description="Low complexity" evidence="3">
    <location>
        <begin position="21"/>
        <end position="31"/>
    </location>
</feature>
<feature type="compositionally biased region" description="Polar residues" evidence="3">
    <location>
        <begin position="43"/>
        <end position="63"/>
    </location>
</feature>
<feature type="compositionally biased region" description="Basic and acidic residues" evidence="3">
    <location>
        <begin position="64"/>
        <end position="73"/>
    </location>
</feature>
<feature type="compositionally biased region" description="Polar residues" evidence="3">
    <location>
        <begin position="74"/>
        <end position="92"/>
    </location>
</feature>
<feature type="compositionally biased region" description="Basic residues" evidence="3">
    <location>
        <begin position="112"/>
        <end position="121"/>
    </location>
</feature>
<feature type="compositionally biased region" description="Polar residues" evidence="3">
    <location>
        <begin position="136"/>
        <end position="146"/>
    </location>
</feature>
<feature type="compositionally biased region" description="Polar residues" evidence="3">
    <location>
        <begin position="161"/>
        <end position="195"/>
    </location>
</feature>
<feature type="compositionally biased region" description="Polar residues" evidence="3">
    <location>
        <begin position="206"/>
        <end position="228"/>
    </location>
</feature>
<feature type="compositionally biased region" description="Low complexity" evidence="3">
    <location>
        <begin position="272"/>
        <end position="304"/>
    </location>
</feature>
<feature type="compositionally biased region" description="Polar residues" evidence="3">
    <location>
        <begin position="379"/>
        <end position="406"/>
    </location>
</feature>
<feature type="active site" description="Proton acceptor" evidence="1 2">
    <location>
        <position position="584"/>
    </location>
</feature>
<feature type="binding site" evidence="1">
    <location>
        <begin position="452"/>
        <end position="460"/>
    </location>
    <ligand>
        <name>ATP</name>
        <dbReference type="ChEBI" id="CHEBI:30616"/>
    </ligand>
</feature>
<feature type="binding site" evidence="1">
    <location>
        <position position="480"/>
    </location>
    <ligand>
        <name>ATP</name>
        <dbReference type="ChEBI" id="CHEBI:30616"/>
    </ligand>
</feature>
<feature type="modified residue" description="Phosphoserine" evidence="5">
    <location>
        <position position="94"/>
    </location>
</feature>
<feature type="modified residue" description="Phosphoserine" evidence="5">
    <location>
        <position position="253"/>
    </location>
</feature>
<accession>O74526</accession>
<accession>Q9UTZ9</accession>
<proteinExistence type="evidence at protein level"/>
<comment type="catalytic activity">
    <reaction>
        <text>L-seryl-[protein] + ATP = O-phospho-L-seryl-[protein] + ADP + H(+)</text>
        <dbReference type="Rhea" id="RHEA:17989"/>
        <dbReference type="Rhea" id="RHEA-COMP:9863"/>
        <dbReference type="Rhea" id="RHEA-COMP:11604"/>
        <dbReference type="ChEBI" id="CHEBI:15378"/>
        <dbReference type="ChEBI" id="CHEBI:29999"/>
        <dbReference type="ChEBI" id="CHEBI:30616"/>
        <dbReference type="ChEBI" id="CHEBI:83421"/>
        <dbReference type="ChEBI" id="CHEBI:456216"/>
        <dbReference type="EC" id="2.7.11.1"/>
    </reaction>
</comment>
<comment type="catalytic activity">
    <reaction>
        <text>L-threonyl-[protein] + ATP = O-phospho-L-threonyl-[protein] + ADP + H(+)</text>
        <dbReference type="Rhea" id="RHEA:46608"/>
        <dbReference type="Rhea" id="RHEA-COMP:11060"/>
        <dbReference type="Rhea" id="RHEA-COMP:11605"/>
        <dbReference type="ChEBI" id="CHEBI:15378"/>
        <dbReference type="ChEBI" id="CHEBI:30013"/>
        <dbReference type="ChEBI" id="CHEBI:30616"/>
        <dbReference type="ChEBI" id="CHEBI:61977"/>
        <dbReference type="ChEBI" id="CHEBI:456216"/>
        <dbReference type="EC" id="2.7.11.1"/>
    </reaction>
</comment>
<comment type="subcellular location">
    <subcellularLocation>
        <location evidence="4">Cytoplasm</location>
    </subcellularLocation>
</comment>
<comment type="similarity">
    <text evidence="1">Belongs to the protein kinase superfamily. Ser/Thr protein kinase family.</text>
</comment>
<keyword id="KW-0067">ATP-binding</keyword>
<keyword id="KW-0963">Cytoplasm</keyword>
<keyword id="KW-0418">Kinase</keyword>
<keyword id="KW-0547">Nucleotide-binding</keyword>
<keyword id="KW-0597">Phosphoprotein</keyword>
<keyword id="KW-1185">Reference proteome</keyword>
<keyword id="KW-0723">Serine/threonine-protein kinase</keyword>
<keyword id="KW-0808">Transferase</keyword>
<gene>
    <name type="ORF">SPCC70.05c</name>
</gene>
<reference key="1">
    <citation type="journal article" date="2002" name="Nature">
        <title>The genome sequence of Schizosaccharomyces pombe.</title>
        <authorList>
            <person name="Wood V."/>
            <person name="Gwilliam R."/>
            <person name="Rajandream M.A."/>
            <person name="Lyne M.H."/>
            <person name="Lyne R."/>
            <person name="Stewart A."/>
            <person name="Sgouros J.G."/>
            <person name="Peat N."/>
            <person name="Hayles J."/>
            <person name="Baker S.G."/>
            <person name="Basham D."/>
            <person name="Bowman S."/>
            <person name="Brooks K."/>
            <person name="Brown D."/>
            <person name="Brown S."/>
            <person name="Chillingworth T."/>
            <person name="Churcher C.M."/>
            <person name="Collins M."/>
            <person name="Connor R."/>
            <person name="Cronin A."/>
            <person name="Davis P."/>
            <person name="Feltwell T."/>
            <person name="Fraser A."/>
            <person name="Gentles S."/>
            <person name="Goble A."/>
            <person name="Hamlin N."/>
            <person name="Harris D.E."/>
            <person name="Hidalgo J."/>
            <person name="Hodgson G."/>
            <person name="Holroyd S."/>
            <person name="Hornsby T."/>
            <person name="Howarth S."/>
            <person name="Huckle E.J."/>
            <person name="Hunt S."/>
            <person name="Jagels K."/>
            <person name="James K.D."/>
            <person name="Jones L."/>
            <person name="Jones M."/>
            <person name="Leather S."/>
            <person name="McDonald S."/>
            <person name="McLean J."/>
            <person name="Mooney P."/>
            <person name="Moule S."/>
            <person name="Mungall K.L."/>
            <person name="Murphy L.D."/>
            <person name="Niblett D."/>
            <person name="Odell C."/>
            <person name="Oliver K."/>
            <person name="O'Neil S."/>
            <person name="Pearson D."/>
            <person name="Quail M.A."/>
            <person name="Rabbinowitsch E."/>
            <person name="Rutherford K.M."/>
            <person name="Rutter S."/>
            <person name="Saunders D."/>
            <person name="Seeger K."/>
            <person name="Sharp S."/>
            <person name="Skelton J."/>
            <person name="Simmonds M.N."/>
            <person name="Squares R."/>
            <person name="Squares S."/>
            <person name="Stevens K."/>
            <person name="Taylor K."/>
            <person name="Taylor R.G."/>
            <person name="Tivey A."/>
            <person name="Walsh S.V."/>
            <person name="Warren T."/>
            <person name="Whitehead S."/>
            <person name="Woodward J.R."/>
            <person name="Volckaert G."/>
            <person name="Aert R."/>
            <person name="Robben J."/>
            <person name="Grymonprez B."/>
            <person name="Weltjens I."/>
            <person name="Vanstreels E."/>
            <person name="Rieger M."/>
            <person name="Schaefer M."/>
            <person name="Mueller-Auer S."/>
            <person name="Gabel C."/>
            <person name="Fuchs M."/>
            <person name="Duesterhoeft A."/>
            <person name="Fritzc C."/>
            <person name="Holzer E."/>
            <person name="Moestl D."/>
            <person name="Hilbert H."/>
            <person name="Borzym K."/>
            <person name="Langer I."/>
            <person name="Beck A."/>
            <person name="Lehrach H."/>
            <person name="Reinhardt R."/>
            <person name="Pohl T.M."/>
            <person name="Eger P."/>
            <person name="Zimmermann W."/>
            <person name="Wedler H."/>
            <person name="Wambutt R."/>
            <person name="Purnelle B."/>
            <person name="Goffeau A."/>
            <person name="Cadieu E."/>
            <person name="Dreano S."/>
            <person name="Gloux S."/>
            <person name="Lelaure V."/>
            <person name="Mottier S."/>
            <person name="Galibert F."/>
            <person name="Aves S.J."/>
            <person name="Xiang Z."/>
            <person name="Hunt C."/>
            <person name="Moore K."/>
            <person name="Hurst S.M."/>
            <person name="Lucas M."/>
            <person name="Rochet M."/>
            <person name="Gaillardin C."/>
            <person name="Tallada V.A."/>
            <person name="Garzon A."/>
            <person name="Thode G."/>
            <person name="Daga R.R."/>
            <person name="Cruzado L."/>
            <person name="Jimenez J."/>
            <person name="Sanchez M."/>
            <person name="del Rey F."/>
            <person name="Benito J."/>
            <person name="Dominguez A."/>
            <person name="Revuelta J.L."/>
            <person name="Moreno S."/>
            <person name="Armstrong J."/>
            <person name="Forsburg S.L."/>
            <person name="Cerutti L."/>
            <person name="Lowe T."/>
            <person name="McCombie W.R."/>
            <person name="Paulsen I."/>
            <person name="Potashkin J."/>
            <person name="Shpakovski G.V."/>
            <person name="Ussery D."/>
            <person name="Barrell B.G."/>
            <person name="Nurse P."/>
        </authorList>
    </citation>
    <scope>NUCLEOTIDE SEQUENCE [LARGE SCALE GENOMIC DNA]</scope>
    <source>
        <strain>972 / ATCC 24843</strain>
    </source>
</reference>
<reference key="2">
    <citation type="journal article" date="2000" name="Genes Cells">
        <title>Large-scale screening of intracellular protein localization in living fission yeast cells by the use of a GFP-fusion genomic DNA library.</title>
        <authorList>
            <person name="Ding D.-Q."/>
            <person name="Tomita Y."/>
            <person name="Yamamoto A."/>
            <person name="Chikashige Y."/>
            <person name="Haraguchi T."/>
            <person name="Hiraoka Y."/>
        </authorList>
    </citation>
    <scope>NUCLEOTIDE SEQUENCE [LARGE SCALE GENOMIC DNA] OF 359-544</scope>
    <scope>SUBCELLULAR LOCATION</scope>
    <source>
        <strain>ATCC 38364 / 968</strain>
    </source>
</reference>
<reference key="3">
    <citation type="journal article" date="2008" name="J. Proteome Res.">
        <title>Phosphoproteome analysis of fission yeast.</title>
        <authorList>
            <person name="Wilson-Grady J.T."/>
            <person name="Villen J."/>
            <person name="Gygi S.P."/>
        </authorList>
    </citation>
    <scope>PHOSPHORYLATION [LARGE SCALE ANALYSIS] AT SER-94 AND SER-253</scope>
    <scope>IDENTIFICATION BY MASS SPECTROMETRY</scope>
</reference>
<sequence>MPSDKPVFDIGSQAPERSDSESPSSRSIGSGTPAPVRKGLSKFKNSFLSRKNSSQIKSPSDYKSSAHEQRVNHTTDSMAHVPGNNSPLQTPQKSPPRQKHTAPATPIPVSASRHHKPHHSGLKNLLEKAMHPGHKSNANSPTSESPSKGFGSFINNHILHKNTSSHPSSPVNGKSSDIHKSQSYQHLKNSPPNSRTARKPVPRRANSASHNLGSTKSPNGNAKESLSRSAELPSKAKPMEINNGYRKKPSPLSPNSSIRNREGGNGSYFDGPLTASPTPSSPTGTPNSMSKSPSLSSLASTGASYRPGPSKPLVSRVRDNYANTSYESWPHSTEFDMFTYAVSGSLKLTPQGTGFDCINPANPFSPGYSGKSSMKSDDNVGSSANTAPNSPTSANSSEGNQGNGPTTYPIKPPTNISEIPRKLKSGFIPPYAKRVVPRLSAKYKLVDETKDMGSGATAVIRIVTLKNPKENEKNLRFAVKAYRRKADDETDGQYIAKLASEWLVQCRMEHPNVVKSYDLCIDSHIFPLYSDTWCAVMDFCPRGDLLSLIEDRHDRLGKKDFECMIKQILRGLNYIHSQGIAHRDIKPENILISEYGVLRITDFGACDVLCNPGDDITAVESKSMGIFGSDPYMAPEILTPGSYNAFFADMWSTAIVLHCLYFRTYPFRKASQNDQLYAKYCKAWREYNLICDVQNIRISKTLPYFKPVNDLPMHMQRLFFCLANPTAEQRITAQEALNLPFVQEIECCSVDDCTCTHDAPEECLEWANPPVQKLSTPHNHL</sequence>
<organism>
    <name type="scientific">Schizosaccharomyces pombe (strain 972 / ATCC 24843)</name>
    <name type="common">Fission yeast</name>
    <dbReference type="NCBI Taxonomy" id="284812"/>
    <lineage>
        <taxon>Eukaryota</taxon>
        <taxon>Fungi</taxon>
        <taxon>Dikarya</taxon>
        <taxon>Ascomycota</taxon>
        <taxon>Taphrinomycotina</taxon>
        <taxon>Schizosaccharomycetes</taxon>
        <taxon>Schizosaccharomycetales</taxon>
        <taxon>Schizosaccharomycetaceae</taxon>
        <taxon>Schizosaccharomyces</taxon>
    </lineage>
</organism>
<name>KJ45_SCHPO</name>
<dbReference type="EC" id="2.7.11.1"/>
<dbReference type="EMBL" id="CU329672">
    <property type="protein sequence ID" value="CAA19355.1"/>
    <property type="molecule type" value="Genomic_DNA"/>
</dbReference>
<dbReference type="EMBL" id="AB027902">
    <property type="protein sequence ID" value="BAA87206.1"/>
    <property type="molecule type" value="Genomic_DNA"/>
</dbReference>
<dbReference type="PIR" id="T41551">
    <property type="entry name" value="T41551"/>
</dbReference>
<dbReference type="SMR" id="O74526"/>
<dbReference type="BioGRID" id="275401">
    <property type="interactions" value="2"/>
</dbReference>
<dbReference type="FunCoup" id="O74526">
    <property type="interactions" value="1"/>
</dbReference>
<dbReference type="STRING" id="284812.O74526"/>
<dbReference type="iPTMnet" id="O74526"/>
<dbReference type="PaxDb" id="4896-SPCC70.05c.1"/>
<dbReference type="EnsemblFungi" id="SPCC70.05c.1">
    <property type="protein sequence ID" value="SPCC70.05c.1:pep"/>
    <property type="gene ID" value="SPCC70.05c"/>
</dbReference>
<dbReference type="KEGG" id="spo:2538820"/>
<dbReference type="PomBase" id="SPCC70.05c"/>
<dbReference type="VEuPathDB" id="FungiDB:SPCC70.05c"/>
<dbReference type="eggNOG" id="KOG0590">
    <property type="taxonomic scope" value="Eukaryota"/>
</dbReference>
<dbReference type="HOGENOM" id="CLU_365306_0_0_1"/>
<dbReference type="InParanoid" id="O74526"/>
<dbReference type="OMA" id="SYESWPH"/>
<dbReference type="PhylomeDB" id="O74526"/>
<dbReference type="PRO" id="PR:O74526"/>
<dbReference type="Proteomes" id="UP000002485">
    <property type="component" value="Chromosome III"/>
</dbReference>
<dbReference type="GO" id="GO:0032153">
    <property type="term" value="C:cell division site"/>
    <property type="evidence" value="ECO:0000314"/>
    <property type="project" value="PomBase"/>
</dbReference>
<dbReference type="GO" id="GO:0005737">
    <property type="term" value="C:cytoplasm"/>
    <property type="evidence" value="ECO:0000318"/>
    <property type="project" value="GO_Central"/>
</dbReference>
<dbReference type="GO" id="GO:0005829">
    <property type="term" value="C:cytosol"/>
    <property type="evidence" value="ECO:0007005"/>
    <property type="project" value="PomBase"/>
</dbReference>
<dbReference type="GO" id="GO:0005634">
    <property type="term" value="C:nucleus"/>
    <property type="evidence" value="ECO:0000318"/>
    <property type="project" value="GO_Central"/>
</dbReference>
<dbReference type="GO" id="GO:0005524">
    <property type="term" value="F:ATP binding"/>
    <property type="evidence" value="ECO:0000255"/>
    <property type="project" value="PomBase"/>
</dbReference>
<dbReference type="GO" id="GO:0106310">
    <property type="term" value="F:protein serine kinase activity"/>
    <property type="evidence" value="ECO:0007669"/>
    <property type="project" value="RHEA"/>
</dbReference>
<dbReference type="GO" id="GO:0004674">
    <property type="term" value="F:protein serine/threonine kinase activity"/>
    <property type="evidence" value="ECO:0000318"/>
    <property type="project" value="GO_Central"/>
</dbReference>
<dbReference type="GO" id="GO:0000086">
    <property type="term" value="P:G2/M transition of mitotic cell cycle"/>
    <property type="evidence" value="ECO:0000318"/>
    <property type="project" value="GO_Central"/>
</dbReference>
<dbReference type="GO" id="GO:0043161">
    <property type="term" value="P:proteasome-mediated ubiquitin-dependent protein catabolic process"/>
    <property type="evidence" value="ECO:0000266"/>
    <property type="project" value="PomBase"/>
</dbReference>
<dbReference type="GO" id="GO:0007165">
    <property type="term" value="P:signal transduction"/>
    <property type="evidence" value="ECO:0000305"/>
    <property type="project" value="PomBase"/>
</dbReference>
<dbReference type="CDD" id="cd13994">
    <property type="entry name" value="STKc_HAL4_like"/>
    <property type="match status" value="1"/>
</dbReference>
<dbReference type="FunFam" id="1.10.510.10:FF:000949">
    <property type="entry name" value="Serine/threonine-protein kinase PTK1/STK1"/>
    <property type="match status" value="1"/>
</dbReference>
<dbReference type="Gene3D" id="1.10.510.10">
    <property type="entry name" value="Transferase(Phosphotransferase) domain 1"/>
    <property type="match status" value="1"/>
</dbReference>
<dbReference type="InterPro" id="IPR011009">
    <property type="entry name" value="Kinase-like_dom_sf"/>
</dbReference>
<dbReference type="InterPro" id="IPR000719">
    <property type="entry name" value="Prot_kinase_dom"/>
</dbReference>
<dbReference type="InterPro" id="IPR008271">
    <property type="entry name" value="Ser/Thr_kinase_AS"/>
</dbReference>
<dbReference type="PANTHER" id="PTHR24345:SF0">
    <property type="entry name" value="CELL CYCLE SERINE_THREONINE-PROTEIN KINASE CDC5_MSD2"/>
    <property type="match status" value="1"/>
</dbReference>
<dbReference type="PANTHER" id="PTHR24345">
    <property type="entry name" value="SERINE/THREONINE-PROTEIN KINASE PLK"/>
    <property type="match status" value="1"/>
</dbReference>
<dbReference type="Pfam" id="PF00069">
    <property type="entry name" value="Pkinase"/>
    <property type="match status" value="1"/>
</dbReference>
<dbReference type="SMART" id="SM00220">
    <property type="entry name" value="S_TKc"/>
    <property type="match status" value="1"/>
</dbReference>
<dbReference type="SUPFAM" id="SSF56112">
    <property type="entry name" value="Protein kinase-like (PK-like)"/>
    <property type="match status" value="1"/>
</dbReference>
<dbReference type="PROSITE" id="PS50011">
    <property type="entry name" value="PROTEIN_KINASE_DOM"/>
    <property type="match status" value="1"/>
</dbReference>
<dbReference type="PROSITE" id="PS00108">
    <property type="entry name" value="PROTEIN_KINASE_ST"/>
    <property type="match status" value="1"/>
</dbReference>
<protein>
    <recommendedName>
        <fullName>Probable serine/threonine-protein kinase C70.05c</fullName>
        <ecNumber>2.7.11.1</ecNumber>
    </recommendedName>
</protein>
<evidence type="ECO:0000255" key="1">
    <source>
        <dbReference type="PROSITE-ProRule" id="PRU00159"/>
    </source>
</evidence>
<evidence type="ECO:0000255" key="2">
    <source>
        <dbReference type="PROSITE-ProRule" id="PRU10027"/>
    </source>
</evidence>
<evidence type="ECO:0000256" key="3">
    <source>
        <dbReference type="SAM" id="MobiDB-lite"/>
    </source>
</evidence>
<evidence type="ECO:0000269" key="4">
    <source>
    </source>
</evidence>
<evidence type="ECO:0000269" key="5">
    <source>
    </source>
</evidence>